<reference key="1">
    <citation type="journal article" date="2007" name="J. Bacteriol.">
        <title>Genome-wide transcriptional changes in Streptococcus gordonii in response to competence signaling peptide.</title>
        <authorList>
            <person name="Vickerman M.M."/>
            <person name="Iobst S."/>
            <person name="Jesionowski A.M."/>
            <person name="Gill S.R."/>
        </authorList>
    </citation>
    <scope>NUCLEOTIDE SEQUENCE [LARGE SCALE GENOMIC DNA]</scope>
    <source>
        <strain>Challis / ATCC 35105 / BCRC 15272 / CH1 / DL1 / V288</strain>
    </source>
</reference>
<comment type="function">
    <text evidence="1">Zinc phosphodiesterase, which displays some tRNA 3'-processing endonuclease activity. Probably involved in tRNA maturation, by removing a 3'-trailer from precursor tRNA.</text>
</comment>
<comment type="catalytic activity">
    <reaction evidence="1">
        <text>Endonucleolytic cleavage of RNA, removing extra 3' nucleotides from tRNA precursor, generating 3' termini of tRNAs. A 3'-hydroxy group is left at the tRNA terminus and a 5'-phosphoryl group is left at the trailer molecule.</text>
        <dbReference type="EC" id="3.1.26.11"/>
    </reaction>
</comment>
<comment type="cofactor">
    <cofactor evidence="1">
        <name>Zn(2+)</name>
        <dbReference type="ChEBI" id="CHEBI:29105"/>
    </cofactor>
    <text evidence="1">Binds 2 Zn(2+) ions.</text>
</comment>
<comment type="subunit">
    <text evidence="1">Homodimer.</text>
</comment>
<comment type="similarity">
    <text evidence="1">Belongs to the RNase Z family.</text>
</comment>
<sequence length="309" mass="34214">MQLQFLGTGAGQPSKARNVSSLVLKLLEEINEVWMFDCGEGTQHQILETTIKPRKISKIFITHLHGDHIFGLPGFLSSRSFQANEEQTDIEIYGPKGIKNFVMSSLRVSGSRLPYRIDFHEFDENSLGKILETDKFTVYADKLDHTIFCVGYRIMQKDLEGTLDADKLRAAGVPFGPLFGKVKNGQDIVLEGGTKIIAADYISAPRPGKTITILGDTRKTDSSVRLAVAADVLVHEATYGKGDEKMARKHGHSTNMQAAEVAKEAGVKQLLLNHVSARFLSKDISVMRQDASTVFENVHVVKDLEEVEI</sequence>
<evidence type="ECO:0000255" key="1">
    <source>
        <dbReference type="HAMAP-Rule" id="MF_01818"/>
    </source>
</evidence>
<accession>A8AWX4</accession>
<name>RNZ_STRGC</name>
<organism>
    <name type="scientific">Streptococcus gordonii (strain Challis / ATCC 35105 / BCRC 15272 / CH1 / DL1 / V288)</name>
    <dbReference type="NCBI Taxonomy" id="467705"/>
    <lineage>
        <taxon>Bacteria</taxon>
        <taxon>Bacillati</taxon>
        <taxon>Bacillota</taxon>
        <taxon>Bacilli</taxon>
        <taxon>Lactobacillales</taxon>
        <taxon>Streptococcaceae</taxon>
        <taxon>Streptococcus</taxon>
    </lineage>
</organism>
<gene>
    <name evidence="1" type="primary">rnz</name>
    <name type="ordered locus">SGO_0995</name>
</gene>
<keyword id="KW-0255">Endonuclease</keyword>
<keyword id="KW-0378">Hydrolase</keyword>
<keyword id="KW-0479">Metal-binding</keyword>
<keyword id="KW-0540">Nuclease</keyword>
<keyword id="KW-1185">Reference proteome</keyword>
<keyword id="KW-0819">tRNA processing</keyword>
<keyword id="KW-0862">Zinc</keyword>
<protein>
    <recommendedName>
        <fullName evidence="1">Ribonuclease Z</fullName>
        <shortName evidence="1">RNase Z</shortName>
        <ecNumber evidence="1">3.1.26.11</ecNumber>
    </recommendedName>
    <alternativeName>
        <fullName evidence="1">tRNA 3 endonuclease</fullName>
    </alternativeName>
    <alternativeName>
        <fullName evidence="1">tRNase Z</fullName>
    </alternativeName>
</protein>
<proteinExistence type="inferred from homology"/>
<feature type="chain" id="PRO_1000088345" description="Ribonuclease Z">
    <location>
        <begin position="1"/>
        <end position="309"/>
    </location>
</feature>
<feature type="active site" description="Proton acceptor" evidence="1">
    <location>
        <position position="67"/>
    </location>
</feature>
<feature type="binding site" evidence="1">
    <location>
        <position position="63"/>
    </location>
    <ligand>
        <name>Zn(2+)</name>
        <dbReference type="ChEBI" id="CHEBI:29105"/>
        <label>1</label>
        <note>catalytic</note>
    </ligand>
</feature>
<feature type="binding site" evidence="1">
    <location>
        <position position="65"/>
    </location>
    <ligand>
        <name>Zn(2+)</name>
        <dbReference type="ChEBI" id="CHEBI:29105"/>
        <label>1</label>
        <note>catalytic</note>
    </ligand>
</feature>
<feature type="binding site" evidence="1">
    <location>
        <position position="67"/>
    </location>
    <ligand>
        <name>Zn(2+)</name>
        <dbReference type="ChEBI" id="CHEBI:29105"/>
        <label>2</label>
        <note>catalytic</note>
    </ligand>
</feature>
<feature type="binding site" evidence="1">
    <location>
        <position position="68"/>
    </location>
    <ligand>
        <name>Zn(2+)</name>
        <dbReference type="ChEBI" id="CHEBI:29105"/>
        <label>2</label>
        <note>catalytic</note>
    </ligand>
</feature>
<feature type="binding site" evidence="1">
    <location>
        <position position="145"/>
    </location>
    <ligand>
        <name>Zn(2+)</name>
        <dbReference type="ChEBI" id="CHEBI:29105"/>
        <label>1</label>
        <note>catalytic</note>
    </ligand>
</feature>
<feature type="binding site" evidence="1">
    <location>
        <position position="216"/>
    </location>
    <ligand>
        <name>Zn(2+)</name>
        <dbReference type="ChEBI" id="CHEBI:29105"/>
        <label>1</label>
        <note>catalytic</note>
    </ligand>
</feature>
<feature type="binding site" evidence="1">
    <location>
        <position position="216"/>
    </location>
    <ligand>
        <name>Zn(2+)</name>
        <dbReference type="ChEBI" id="CHEBI:29105"/>
        <label>2</label>
        <note>catalytic</note>
    </ligand>
</feature>
<feature type="binding site" evidence="1">
    <location>
        <position position="274"/>
    </location>
    <ligand>
        <name>Zn(2+)</name>
        <dbReference type="ChEBI" id="CHEBI:29105"/>
        <label>2</label>
        <note>catalytic</note>
    </ligand>
</feature>
<dbReference type="EC" id="3.1.26.11" evidence="1"/>
<dbReference type="EMBL" id="CP000725">
    <property type="protein sequence ID" value="ABV10670.1"/>
    <property type="molecule type" value="Genomic_DNA"/>
</dbReference>
<dbReference type="RefSeq" id="WP_012000412.1">
    <property type="nucleotide sequence ID" value="NC_009785.1"/>
</dbReference>
<dbReference type="SMR" id="A8AWX4"/>
<dbReference type="STRING" id="467705.SGO_0995"/>
<dbReference type="KEGG" id="sgo:SGO_0995"/>
<dbReference type="eggNOG" id="COG1234">
    <property type="taxonomic scope" value="Bacteria"/>
</dbReference>
<dbReference type="HOGENOM" id="CLU_031317_2_0_9"/>
<dbReference type="Proteomes" id="UP000001131">
    <property type="component" value="Chromosome"/>
</dbReference>
<dbReference type="GO" id="GO:0042781">
    <property type="term" value="F:3'-tRNA processing endoribonuclease activity"/>
    <property type="evidence" value="ECO:0007669"/>
    <property type="project" value="UniProtKB-UniRule"/>
</dbReference>
<dbReference type="GO" id="GO:0008270">
    <property type="term" value="F:zinc ion binding"/>
    <property type="evidence" value="ECO:0007669"/>
    <property type="project" value="UniProtKB-UniRule"/>
</dbReference>
<dbReference type="CDD" id="cd07717">
    <property type="entry name" value="RNaseZ_ZiPD-like_MBL-fold"/>
    <property type="match status" value="1"/>
</dbReference>
<dbReference type="FunFam" id="3.60.15.10:FF:000002">
    <property type="entry name" value="Ribonuclease Z"/>
    <property type="match status" value="1"/>
</dbReference>
<dbReference type="Gene3D" id="3.60.15.10">
    <property type="entry name" value="Ribonuclease Z/Hydroxyacylglutathione hydrolase-like"/>
    <property type="match status" value="1"/>
</dbReference>
<dbReference type="HAMAP" id="MF_01818">
    <property type="entry name" value="RNase_Z_BN"/>
    <property type="match status" value="1"/>
</dbReference>
<dbReference type="InterPro" id="IPR001279">
    <property type="entry name" value="Metallo-B-lactamas"/>
</dbReference>
<dbReference type="InterPro" id="IPR036866">
    <property type="entry name" value="RibonucZ/Hydroxyglut_hydro"/>
</dbReference>
<dbReference type="InterPro" id="IPR013471">
    <property type="entry name" value="RNase_Z/BN"/>
</dbReference>
<dbReference type="NCBIfam" id="NF000801">
    <property type="entry name" value="PRK00055.1-3"/>
    <property type="match status" value="1"/>
</dbReference>
<dbReference type="NCBIfam" id="TIGR02651">
    <property type="entry name" value="RNase_Z"/>
    <property type="match status" value="1"/>
</dbReference>
<dbReference type="PANTHER" id="PTHR46018">
    <property type="entry name" value="ZINC PHOSPHODIESTERASE ELAC PROTEIN 1"/>
    <property type="match status" value="1"/>
</dbReference>
<dbReference type="PANTHER" id="PTHR46018:SF2">
    <property type="entry name" value="ZINC PHOSPHODIESTERASE ELAC PROTEIN 1"/>
    <property type="match status" value="1"/>
</dbReference>
<dbReference type="Pfam" id="PF00753">
    <property type="entry name" value="Lactamase_B"/>
    <property type="match status" value="1"/>
</dbReference>
<dbReference type="SUPFAM" id="SSF56281">
    <property type="entry name" value="Metallo-hydrolase/oxidoreductase"/>
    <property type="match status" value="1"/>
</dbReference>